<organism>
    <name type="scientific">Acinetobacter baumannii (strain AB0057)</name>
    <dbReference type="NCBI Taxonomy" id="480119"/>
    <lineage>
        <taxon>Bacteria</taxon>
        <taxon>Pseudomonadati</taxon>
        <taxon>Pseudomonadota</taxon>
        <taxon>Gammaproteobacteria</taxon>
        <taxon>Moraxellales</taxon>
        <taxon>Moraxellaceae</taxon>
        <taxon>Acinetobacter</taxon>
        <taxon>Acinetobacter calcoaceticus/baumannii complex</taxon>
    </lineage>
</organism>
<feature type="chain" id="PRO_1000194967" description="Ribosomal RNA large subunit methyltransferase E">
    <location>
        <begin position="1"/>
        <end position="216"/>
    </location>
</feature>
<feature type="active site" description="Proton acceptor" evidence="1">
    <location>
        <position position="168"/>
    </location>
</feature>
<feature type="binding site" evidence="1">
    <location>
        <position position="67"/>
    </location>
    <ligand>
        <name>S-adenosyl-L-methionine</name>
        <dbReference type="ChEBI" id="CHEBI:59789"/>
    </ligand>
</feature>
<feature type="binding site" evidence="1">
    <location>
        <position position="69"/>
    </location>
    <ligand>
        <name>S-adenosyl-L-methionine</name>
        <dbReference type="ChEBI" id="CHEBI:59789"/>
    </ligand>
</feature>
<feature type="binding site" evidence="1">
    <location>
        <position position="87"/>
    </location>
    <ligand>
        <name>S-adenosyl-L-methionine</name>
        <dbReference type="ChEBI" id="CHEBI:59789"/>
    </ligand>
</feature>
<feature type="binding site" evidence="1">
    <location>
        <position position="103"/>
    </location>
    <ligand>
        <name>S-adenosyl-L-methionine</name>
        <dbReference type="ChEBI" id="CHEBI:59789"/>
    </ligand>
</feature>
<feature type="binding site" evidence="1">
    <location>
        <position position="128"/>
    </location>
    <ligand>
        <name>S-adenosyl-L-methionine</name>
        <dbReference type="ChEBI" id="CHEBI:59789"/>
    </ligand>
</feature>
<name>RLME_ACIB5</name>
<sequence>MATRITNQKLSKSSRAWMREHLDDPFVKKAQKEGYRARAAYKLLEIQEKYKLIKPGMTVVDLGAAPGSWSQIAGKLVGSKGLVIASDILPMDALPDVTFLQGDFREEAVFEKLLNILNGRQVDIVISDMAPNTSGNRAVDQPRQIYLCELALDFAQKVLGPNGQFVVKVFQGAGFDEFRKQVVDSFDVLKTAKPAASRARSKEVFLVGQGRKKALQ</sequence>
<comment type="function">
    <text evidence="1">Specifically methylates the uridine in position 2552 of 23S rRNA at the 2'-O position of the ribose in the fully assembled 50S ribosomal subunit.</text>
</comment>
<comment type="catalytic activity">
    <reaction evidence="1">
        <text>uridine(2552) in 23S rRNA + S-adenosyl-L-methionine = 2'-O-methyluridine(2552) in 23S rRNA + S-adenosyl-L-homocysteine + H(+)</text>
        <dbReference type="Rhea" id="RHEA:42720"/>
        <dbReference type="Rhea" id="RHEA-COMP:10202"/>
        <dbReference type="Rhea" id="RHEA-COMP:10203"/>
        <dbReference type="ChEBI" id="CHEBI:15378"/>
        <dbReference type="ChEBI" id="CHEBI:57856"/>
        <dbReference type="ChEBI" id="CHEBI:59789"/>
        <dbReference type="ChEBI" id="CHEBI:65315"/>
        <dbReference type="ChEBI" id="CHEBI:74478"/>
        <dbReference type="EC" id="2.1.1.166"/>
    </reaction>
</comment>
<comment type="subcellular location">
    <subcellularLocation>
        <location evidence="1">Cytoplasm</location>
    </subcellularLocation>
</comment>
<comment type="similarity">
    <text evidence="1">Belongs to the class I-like SAM-binding methyltransferase superfamily. RNA methyltransferase RlmE family.</text>
</comment>
<evidence type="ECO:0000255" key="1">
    <source>
        <dbReference type="HAMAP-Rule" id="MF_01547"/>
    </source>
</evidence>
<keyword id="KW-0963">Cytoplasm</keyword>
<keyword id="KW-0489">Methyltransferase</keyword>
<keyword id="KW-0698">rRNA processing</keyword>
<keyword id="KW-0949">S-adenosyl-L-methionine</keyword>
<keyword id="KW-0808">Transferase</keyword>
<accession>B7I636</accession>
<dbReference type="EC" id="2.1.1.166" evidence="1"/>
<dbReference type="EMBL" id="CP001182">
    <property type="protein sequence ID" value="ACJ41682.1"/>
    <property type="molecule type" value="Genomic_DNA"/>
</dbReference>
<dbReference type="RefSeq" id="WP_000235573.1">
    <property type="nucleotide sequence ID" value="NC_011586.2"/>
</dbReference>
<dbReference type="SMR" id="B7I636"/>
<dbReference type="GeneID" id="92894959"/>
<dbReference type="KEGG" id="abn:AB57_3097"/>
<dbReference type="HOGENOM" id="CLU_009422_4_0_6"/>
<dbReference type="Proteomes" id="UP000007094">
    <property type="component" value="Chromosome"/>
</dbReference>
<dbReference type="GO" id="GO:0005737">
    <property type="term" value="C:cytoplasm"/>
    <property type="evidence" value="ECO:0007669"/>
    <property type="project" value="UniProtKB-SubCell"/>
</dbReference>
<dbReference type="GO" id="GO:0008650">
    <property type="term" value="F:rRNA (uridine-2'-O-)-methyltransferase activity"/>
    <property type="evidence" value="ECO:0007669"/>
    <property type="project" value="UniProtKB-UniRule"/>
</dbReference>
<dbReference type="FunFam" id="3.40.50.150:FF:000005">
    <property type="entry name" value="Ribosomal RNA large subunit methyltransferase E"/>
    <property type="match status" value="1"/>
</dbReference>
<dbReference type="Gene3D" id="3.40.50.150">
    <property type="entry name" value="Vaccinia Virus protein VP39"/>
    <property type="match status" value="1"/>
</dbReference>
<dbReference type="HAMAP" id="MF_01547">
    <property type="entry name" value="RNA_methyltr_E"/>
    <property type="match status" value="1"/>
</dbReference>
<dbReference type="InterPro" id="IPR050082">
    <property type="entry name" value="RNA_methyltr_RlmE"/>
</dbReference>
<dbReference type="InterPro" id="IPR002877">
    <property type="entry name" value="RNA_MeTrfase_FtsJ_dom"/>
</dbReference>
<dbReference type="InterPro" id="IPR015507">
    <property type="entry name" value="rRNA-MeTfrase_E"/>
</dbReference>
<dbReference type="InterPro" id="IPR029063">
    <property type="entry name" value="SAM-dependent_MTases_sf"/>
</dbReference>
<dbReference type="NCBIfam" id="NF008390">
    <property type="entry name" value="PRK11188.1"/>
    <property type="match status" value="1"/>
</dbReference>
<dbReference type="PANTHER" id="PTHR10920">
    <property type="entry name" value="RIBOSOMAL RNA METHYLTRANSFERASE"/>
    <property type="match status" value="1"/>
</dbReference>
<dbReference type="PANTHER" id="PTHR10920:SF18">
    <property type="entry name" value="RRNA METHYLTRANSFERASE 2, MITOCHONDRIAL"/>
    <property type="match status" value="1"/>
</dbReference>
<dbReference type="Pfam" id="PF01728">
    <property type="entry name" value="FtsJ"/>
    <property type="match status" value="1"/>
</dbReference>
<dbReference type="PIRSF" id="PIRSF005461">
    <property type="entry name" value="23S_rRNA_mtase"/>
    <property type="match status" value="1"/>
</dbReference>
<dbReference type="SUPFAM" id="SSF53335">
    <property type="entry name" value="S-adenosyl-L-methionine-dependent methyltransferases"/>
    <property type="match status" value="1"/>
</dbReference>
<protein>
    <recommendedName>
        <fullName evidence="1">Ribosomal RNA large subunit methyltransferase E</fullName>
        <ecNumber evidence="1">2.1.1.166</ecNumber>
    </recommendedName>
    <alternativeName>
        <fullName evidence="1">23S rRNA Um2552 methyltransferase</fullName>
    </alternativeName>
    <alternativeName>
        <fullName evidence="1">rRNA (uridine-2'-O-)-methyltransferase</fullName>
    </alternativeName>
</protein>
<reference key="1">
    <citation type="journal article" date="2008" name="J. Bacteriol.">
        <title>Comparative genome sequence analysis of multidrug-resistant Acinetobacter baumannii.</title>
        <authorList>
            <person name="Adams M.D."/>
            <person name="Goglin K."/>
            <person name="Molyneaux N."/>
            <person name="Hujer K.M."/>
            <person name="Lavender H."/>
            <person name="Jamison J.J."/>
            <person name="MacDonald I.J."/>
            <person name="Martin K.M."/>
            <person name="Russo T."/>
            <person name="Campagnari A.A."/>
            <person name="Hujer A.M."/>
            <person name="Bonomo R.A."/>
            <person name="Gill S.R."/>
        </authorList>
    </citation>
    <scope>NUCLEOTIDE SEQUENCE [LARGE SCALE GENOMIC DNA]</scope>
    <source>
        <strain>AB0057</strain>
    </source>
</reference>
<gene>
    <name evidence="1" type="primary">rlmE</name>
    <name evidence="1" type="synonym">ftsJ</name>
    <name evidence="1" type="synonym">rrmJ</name>
    <name type="ordered locus">AB57_3097</name>
</gene>
<proteinExistence type="inferred from homology"/>